<name>EFG1P_ASPTN</name>
<comment type="function">
    <text evidence="1">Involved in rRNA processing.</text>
</comment>
<comment type="subcellular location">
    <subcellularLocation>
        <location evidence="1">Nucleus</location>
        <location evidence="1">Nucleolus</location>
    </subcellularLocation>
</comment>
<comment type="similarity">
    <text evidence="4">Belongs to the EFG1 family.</text>
</comment>
<gene>
    <name type="primary">efg1</name>
    <name type="ORF">ATEG_09605</name>
</gene>
<organism>
    <name type="scientific">Aspergillus terreus (strain NIH 2624 / FGSC A1156)</name>
    <dbReference type="NCBI Taxonomy" id="341663"/>
    <lineage>
        <taxon>Eukaryota</taxon>
        <taxon>Fungi</taxon>
        <taxon>Dikarya</taxon>
        <taxon>Ascomycota</taxon>
        <taxon>Pezizomycotina</taxon>
        <taxon>Eurotiomycetes</taxon>
        <taxon>Eurotiomycetidae</taxon>
        <taxon>Eurotiales</taxon>
        <taxon>Aspergillaceae</taxon>
        <taxon>Aspergillus</taxon>
        <taxon>Aspergillus subgen. Circumdati</taxon>
    </lineage>
</organism>
<proteinExistence type="inferred from homology"/>
<sequence>MPRDYSRSQSPVSNPTGDRNYRDRSDRPKRKDRDVSEDAPHHAYRKKIKIPKKEHPYPSVNELKKRIRDVKRLLNRVDLPADARIVQERALAGYENDLEEEMQRRHRSAMIKKYHFVRFLDRKTATKDVKRLERREQEVSKSDLDAVAKEKKLAALSQKLDIARVNLNYTIYYPLTEKYIALYAAVKKNKDGTTDGAADDSDVDAGYKLVHATREEKPAMWHVVEKCMKDGTLELLREGKLDTPDVDSTGKGSQKSKIDKHAQSKTDQTKSKSKKSEYKDTKHATKGKGRSVTSAASDENGDESDGGFFEM</sequence>
<feature type="chain" id="PRO_0000330263" description="rRNA-processing protein efg1">
    <location>
        <begin position="1"/>
        <end position="311"/>
    </location>
</feature>
<feature type="region of interest" description="Disordered" evidence="3">
    <location>
        <begin position="1"/>
        <end position="54"/>
    </location>
</feature>
<feature type="region of interest" description="Disordered" evidence="3">
    <location>
        <begin position="239"/>
        <end position="311"/>
    </location>
</feature>
<feature type="coiled-coil region" evidence="2">
    <location>
        <begin position="59"/>
        <end position="168"/>
    </location>
</feature>
<feature type="compositionally biased region" description="Polar residues" evidence="3">
    <location>
        <begin position="7"/>
        <end position="17"/>
    </location>
</feature>
<feature type="compositionally biased region" description="Basic and acidic residues" evidence="3">
    <location>
        <begin position="19"/>
        <end position="41"/>
    </location>
</feature>
<feature type="compositionally biased region" description="Basic and acidic residues" evidence="3">
    <location>
        <begin position="256"/>
        <end position="283"/>
    </location>
</feature>
<reference key="1">
    <citation type="submission" date="2005-09" db="EMBL/GenBank/DDBJ databases">
        <title>Annotation of the Aspergillus terreus NIH2624 genome.</title>
        <authorList>
            <person name="Birren B.W."/>
            <person name="Lander E.S."/>
            <person name="Galagan J.E."/>
            <person name="Nusbaum C."/>
            <person name="Devon K."/>
            <person name="Henn M."/>
            <person name="Ma L.-J."/>
            <person name="Jaffe D.B."/>
            <person name="Butler J."/>
            <person name="Alvarez P."/>
            <person name="Gnerre S."/>
            <person name="Grabherr M."/>
            <person name="Kleber M."/>
            <person name="Mauceli E.W."/>
            <person name="Brockman W."/>
            <person name="Rounsley S."/>
            <person name="Young S.K."/>
            <person name="LaButti K."/>
            <person name="Pushparaj V."/>
            <person name="DeCaprio D."/>
            <person name="Crawford M."/>
            <person name="Koehrsen M."/>
            <person name="Engels R."/>
            <person name="Montgomery P."/>
            <person name="Pearson M."/>
            <person name="Howarth C."/>
            <person name="Larson L."/>
            <person name="Luoma S."/>
            <person name="White J."/>
            <person name="Alvarado L."/>
            <person name="Kodira C.D."/>
            <person name="Zeng Q."/>
            <person name="Oleary S."/>
            <person name="Yandava C."/>
            <person name="Denning D.W."/>
            <person name="Nierman W.C."/>
            <person name="Milne T."/>
            <person name="Madden K."/>
        </authorList>
    </citation>
    <scope>NUCLEOTIDE SEQUENCE [LARGE SCALE GENOMIC DNA]</scope>
    <source>
        <strain>NIH 2624 / FGSC A1156</strain>
    </source>
</reference>
<evidence type="ECO:0000250" key="1"/>
<evidence type="ECO:0000255" key="2"/>
<evidence type="ECO:0000256" key="3">
    <source>
        <dbReference type="SAM" id="MobiDB-lite"/>
    </source>
</evidence>
<evidence type="ECO:0000305" key="4"/>
<protein>
    <recommendedName>
        <fullName>rRNA-processing protein efg1</fullName>
    </recommendedName>
</protein>
<keyword id="KW-0175">Coiled coil</keyword>
<keyword id="KW-0539">Nucleus</keyword>
<keyword id="KW-1185">Reference proteome</keyword>
<keyword id="KW-0698">rRNA processing</keyword>
<accession>Q0C9M9</accession>
<dbReference type="EMBL" id="CH476608">
    <property type="protein sequence ID" value="EAU29796.1"/>
    <property type="molecule type" value="Genomic_DNA"/>
</dbReference>
<dbReference type="RefSeq" id="XP_001218227.1">
    <property type="nucleotide sequence ID" value="XM_001218226.1"/>
</dbReference>
<dbReference type="SMR" id="Q0C9M9"/>
<dbReference type="STRING" id="341663.Q0C9M9"/>
<dbReference type="EnsemblFungi" id="EAU29796">
    <property type="protein sequence ID" value="EAU29796"/>
    <property type="gene ID" value="ATEG_09605"/>
</dbReference>
<dbReference type="GeneID" id="4354479"/>
<dbReference type="VEuPathDB" id="FungiDB:ATEG_09605"/>
<dbReference type="eggNOG" id="KOG4484">
    <property type="taxonomic scope" value="Eukaryota"/>
</dbReference>
<dbReference type="HOGENOM" id="CLU_066912_0_0_1"/>
<dbReference type="OMA" id="KCMEEGT"/>
<dbReference type="OrthoDB" id="47732at2759"/>
<dbReference type="Proteomes" id="UP000007963">
    <property type="component" value="Unassembled WGS sequence"/>
</dbReference>
<dbReference type="GO" id="GO:0005730">
    <property type="term" value="C:nucleolus"/>
    <property type="evidence" value="ECO:0007669"/>
    <property type="project" value="UniProtKB-SubCell"/>
</dbReference>
<dbReference type="GO" id="GO:0030688">
    <property type="term" value="C:preribosome, small subunit precursor"/>
    <property type="evidence" value="ECO:0007669"/>
    <property type="project" value="TreeGrafter"/>
</dbReference>
<dbReference type="GO" id="GO:0000462">
    <property type="term" value="P:maturation of SSU-rRNA from tricistronic rRNA transcript (SSU-rRNA, 5.8S rRNA, LSU-rRNA)"/>
    <property type="evidence" value="ECO:0007669"/>
    <property type="project" value="TreeGrafter"/>
</dbReference>
<dbReference type="InterPro" id="IPR019310">
    <property type="entry name" value="Efg1"/>
</dbReference>
<dbReference type="InterPro" id="IPR050786">
    <property type="entry name" value="EFG1_rRNA-proc"/>
</dbReference>
<dbReference type="PANTHER" id="PTHR33911">
    <property type="entry name" value="RRNA-PROCESSING PROTEIN EFG1"/>
    <property type="match status" value="1"/>
</dbReference>
<dbReference type="PANTHER" id="PTHR33911:SF1">
    <property type="entry name" value="RRNA-PROCESSING PROTEIN EFG1"/>
    <property type="match status" value="1"/>
</dbReference>
<dbReference type="Pfam" id="PF10153">
    <property type="entry name" value="Efg1"/>
    <property type="match status" value="1"/>
</dbReference>